<name>ILVD_NITV2</name>
<protein>
    <recommendedName>
        <fullName evidence="1">Dihydroxy-acid dehydratase</fullName>
        <shortName evidence="1">DAD</shortName>
        <ecNumber evidence="1">4.2.1.9</ecNumber>
    </recommendedName>
</protein>
<dbReference type="EC" id="4.2.1.9" evidence="1"/>
<dbReference type="EMBL" id="AE017285">
    <property type="protein sequence ID" value="AAS97842.1"/>
    <property type="molecule type" value="Genomic_DNA"/>
</dbReference>
<dbReference type="RefSeq" id="WP_010940628.1">
    <property type="nucleotide sequence ID" value="NC_002937.3"/>
</dbReference>
<dbReference type="RefSeq" id="YP_012582.1">
    <property type="nucleotide sequence ID" value="NC_002937.3"/>
</dbReference>
<dbReference type="SMR" id="Q725Q1"/>
<dbReference type="IntAct" id="Q725Q1">
    <property type="interactions" value="4"/>
</dbReference>
<dbReference type="STRING" id="882.DVU_3373"/>
<dbReference type="PaxDb" id="882-DVU_3373"/>
<dbReference type="EnsemblBacteria" id="AAS97842">
    <property type="protein sequence ID" value="AAS97842"/>
    <property type="gene ID" value="DVU_3373"/>
</dbReference>
<dbReference type="KEGG" id="dvu:DVU_3373"/>
<dbReference type="PATRIC" id="fig|882.5.peg.3061"/>
<dbReference type="eggNOG" id="COG0129">
    <property type="taxonomic scope" value="Bacteria"/>
</dbReference>
<dbReference type="HOGENOM" id="CLU_014271_4_2_7"/>
<dbReference type="OrthoDB" id="9807077at2"/>
<dbReference type="PhylomeDB" id="Q725Q1"/>
<dbReference type="UniPathway" id="UPA00047">
    <property type="reaction ID" value="UER00057"/>
</dbReference>
<dbReference type="UniPathway" id="UPA00049">
    <property type="reaction ID" value="UER00061"/>
</dbReference>
<dbReference type="Proteomes" id="UP000002194">
    <property type="component" value="Chromosome"/>
</dbReference>
<dbReference type="GO" id="GO:0005829">
    <property type="term" value="C:cytosol"/>
    <property type="evidence" value="ECO:0007669"/>
    <property type="project" value="TreeGrafter"/>
</dbReference>
<dbReference type="GO" id="GO:0051537">
    <property type="term" value="F:2 iron, 2 sulfur cluster binding"/>
    <property type="evidence" value="ECO:0007669"/>
    <property type="project" value="UniProtKB-UniRule"/>
</dbReference>
<dbReference type="GO" id="GO:0004160">
    <property type="term" value="F:dihydroxy-acid dehydratase activity"/>
    <property type="evidence" value="ECO:0007669"/>
    <property type="project" value="UniProtKB-UniRule"/>
</dbReference>
<dbReference type="GO" id="GO:0000287">
    <property type="term" value="F:magnesium ion binding"/>
    <property type="evidence" value="ECO:0007669"/>
    <property type="project" value="UniProtKB-UniRule"/>
</dbReference>
<dbReference type="GO" id="GO:0009097">
    <property type="term" value="P:isoleucine biosynthetic process"/>
    <property type="evidence" value="ECO:0007669"/>
    <property type="project" value="UniProtKB-UniRule"/>
</dbReference>
<dbReference type="GO" id="GO:0009099">
    <property type="term" value="P:L-valine biosynthetic process"/>
    <property type="evidence" value="ECO:0007669"/>
    <property type="project" value="UniProtKB-UniRule"/>
</dbReference>
<dbReference type="FunFam" id="3.50.30.80:FF:000001">
    <property type="entry name" value="Dihydroxy-acid dehydratase"/>
    <property type="match status" value="1"/>
</dbReference>
<dbReference type="Gene3D" id="3.50.30.80">
    <property type="entry name" value="IlvD/EDD C-terminal domain-like"/>
    <property type="match status" value="1"/>
</dbReference>
<dbReference type="HAMAP" id="MF_00012">
    <property type="entry name" value="IlvD"/>
    <property type="match status" value="1"/>
</dbReference>
<dbReference type="InterPro" id="IPR042096">
    <property type="entry name" value="Dihydro-acid_dehy_C"/>
</dbReference>
<dbReference type="InterPro" id="IPR004404">
    <property type="entry name" value="DihydroxyA_deHydtase"/>
</dbReference>
<dbReference type="InterPro" id="IPR020558">
    <property type="entry name" value="DiOHA_6PGluconate_deHydtase_CS"/>
</dbReference>
<dbReference type="InterPro" id="IPR056740">
    <property type="entry name" value="ILV_EDD_C"/>
</dbReference>
<dbReference type="InterPro" id="IPR000581">
    <property type="entry name" value="ILV_EDD_N"/>
</dbReference>
<dbReference type="InterPro" id="IPR037237">
    <property type="entry name" value="IlvD/EDD_N"/>
</dbReference>
<dbReference type="NCBIfam" id="TIGR00110">
    <property type="entry name" value="ilvD"/>
    <property type="match status" value="1"/>
</dbReference>
<dbReference type="NCBIfam" id="NF002068">
    <property type="entry name" value="PRK00911.1"/>
    <property type="match status" value="1"/>
</dbReference>
<dbReference type="PANTHER" id="PTHR43661">
    <property type="entry name" value="D-XYLONATE DEHYDRATASE"/>
    <property type="match status" value="1"/>
</dbReference>
<dbReference type="PANTHER" id="PTHR43661:SF3">
    <property type="entry name" value="D-XYLONATE DEHYDRATASE YAGF-RELATED"/>
    <property type="match status" value="1"/>
</dbReference>
<dbReference type="Pfam" id="PF24877">
    <property type="entry name" value="ILV_EDD_C"/>
    <property type="match status" value="1"/>
</dbReference>
<dbReference type="Pfam" id="PF00920">
    <property type="entry name" value="ILVD_EDD_N"/>
    <property type="match status" value="1"/>
</dbReference>
<dbReference type="SUPFAM" id="SSF143975">
    <property type="entry name" value="IlvD/EDD N-terminal domain-like"/>
    <property type="match status" value="1"/>
</dbReference>
<dbReference type="SUPFAM" id="SSF52016">
    <property type="entry name" value="LeuD/IlvD-like"/>
    <property type="match status" value="1"/>
</dbReference>
<dbReference type="PROSITE" id="PS00886">
    <property type="entry name" value="ILVD_EDD_1"/>
    <property type="match status" value="1"/>
</dbReference>
<dbReference type="PROSITE" id="PS00887">
    <property type="entry name" value="ILVD_EDD_2"/>
    <property type="match status" value="1"/>
</dbReference>
<proteinExistence type="inferred from homology"/>
<reference key="1">
    <citation type="journal article" date="2004" name="Nat. Biotechnol.">
        <title>The genome sequence of the anaerobic, sulfate-reducing bacterium Desulfovibrio vulgaris Hildenborough.</title>
        <authorList>
            <person name="Heidelberg J.F."/>
            <person name="Seshadri R."/>
            <person name="Haveman S.A."/>
            <person name="Hemme C.L."/>
            <person name="Paulsen I.T."/>
            <person name="Kolonay J.F."/>
            <person name="Eisen J.A."/>
            <person name="Ward N.L."/>
            <person name="Methe B.A."/>
            <person name="Brinkac L.M."/>
            <person name="Daugherty S.C."/>
            <person name="DeBoy R.T."/>
            <person name="Dodson R.J."/>
            <person name="Durkin A.S."/>
            <person name="Madupu R."/>
            <person name="Nelson W.C."/>
            <person name="Sullivan S.A."/>
            <person name="Fouts D.E."/>
            <person name="Haft D.H."/>
            <person name="Selengut J."/>
            <person name="Peterson J.D."/>
            <person name="Davidsen T.M."/>
            <person name="Zafar N."/>
            <person name="Zhou L."/>
            <person name="Radune D."/>
            <person name="Dimitrov G."/>
            <person name="Hance M."/>
            <person name="Tran K."/>
            <person name="Khouri H.M."/>
            <person name="Gill J."/>
            <person name="Utterback T.R."/>
            <person name="Feldblyum T.V."/>
            <person name="Wall J.D."/>
            <person name="Voordouw G."/>
            <person name="Fraser C.M."/>
        </authorList>
    </citation>
    <scope>NUCLEOTIDE SEQUENCE [LARGE SCALE GENOMIC DNA]</scope>
    <source>
        <strain>ATCC 29579 / DSM 644 / CCUG 34227 / NCIMB 8303 / VKM B-1760 / Hildenborough</strain>
    </source>
</reference>
<gene>
    <name evidence="1" type="primary">ilvD</name>
    <name type="ordered locus">DVU_3373</name>
</gene>
<feature type="chain" id="PRO_0000225390" description="Dihydroxy-acid dehydratase">
    <location>
        <begin position="1"/>
        <end position="554"/>
    </location>
</feature>
<feature type="active site" description="Proton acceptor" evidence="1">
    <location>
        <position position="470"/>
    </location>
</feature>
<feature type="binding site" evidence="1">
    <location>
        <position position="78"/>
    </location>
    <ligand>
        <name>Mg(2+)</name>
        <dbReference type="ChEBI" id="CHEBI:18420"/>
    </ligand>
</feature>
<feature type="binding site" evidence="1">
    <location>
        <position position="119"/>
    </location>
    <ligand>
        <name>[2Fe-2S] cluster</name>
        <dbReference type="ChEBI" id="CHEBI:190135"/>
    </ligand>
</feature>
<feature type="binding site" evidence="1">
    <location>
        <position position="120"/>
    </location>
    <ligand>
        <name>Mg(2+)</name>
        <dbReference type="ChEBI" id="CHEBI:18420"/>
    </ligand>
</feature>
<feature type="binding site" description="via carbamate group" evidence="1">
    <location>
        <position position="121"/>
    </location>
    <ligand>
        <name>Mg(2+)</name>
        <dbReference type="ChEBI" id="CHEBI:18420"/>
    </ligand>
</feature>
<feature type="binding site" evidence="1">
    <location>
        <position position="191"/>
    </location>
    <ligand>
        <name>[2Fe-2S] cluster</name>
        <dbReference type="ChEBI" id="CHEBI:190135"/>
    </ligand>
</feature>
<feature type="binding site" evidence="1">
    <location>
        <position position="444"/>
    </location>
    <ligand>
        <name>Mg(2+)</name>
        <dbReference type="ChEBI" id="CHEBI:18420"/>
    </ligand>
</feature>
<feature type="modified residue" description="N6-carboxylysine" evidence="1">
    <location>
        <position position="121"/>
    </location>
</feature>
<sequence>MRSKKMTHGLEKAPHRSLLHALGLTREELARPLVGVVNAANEVVPGHIHLDDIAEAVKAGVRAAGGTPLEFPAIAVCDGLAMNHEGMRFSLPSRELIADSIEIMATAHPFDALVFIPNCDKSVPGMLMAMLRLDVPSVMVSGGPMLAGATLAGRADLITVFEGVGRVQRGDMTEAELDELVEGACPGCGSCAGMFTANSMNCLAETIGLALPGNGTTPAVTAARIRLAKHAGMKVMEMLERNIRPRDIVTEKAVANAVAVDMALGCSTNTVLHLPAVFAEAGLDLTLDIFDKVSRKTPNLCKLSPAGHHHIQDLHAAGGIPAVMAELDRIGLIDRSAMTVTGRTVGENLDALGAKVRDADVIRPVDAPYSPQGGIAILKGSLAPGGAVVKQSAVAPEMMVREAVARVFDSEEAACEAIMGGRIKAGDAIVIRYEGPKGGPGMREMLTPTSAIAGMGLGADVALITDGRFSGGTRGAAIGHVSPEAAEGGPIGLVQEGDRIRIDIPARALDLLVDEDELARRRAAFVPVEKEITSPLLRRYARMVSSAATGARQR</sequence>
<accession>Q725Q1</accession>
<keyword id="KW-0001">2Fe-2S</keyword>
<keyword id="KW-0028">Amino-acid biosynthesis</keyword>
<keyword id="KW-0100">Branched-chain amino acid biosynthesis</keyword>
<keyword id="KW-0408">Iron</keyword>
<keyword id="KW-0411">Iron-sulfur</keyword>
<keyword id="KW-0456">Lyase</keyword>
<keyword id="KW-0460">Magnesium</keyword>
<keyword id="KW-0479">Metal-binding</keyword>
<keyword id="KW-1185">Reference proteome</keyword>
<organism>
    <name type="scientific">Nitratidesulfovibrio vulgaris (strain ATCC 29579 / DSM 644 / CCUG 34227 / NCIMB 8303 / VKM B-1760 / Hildenborough)</name>
    <name type="common">Desulfovibrio vulgaris</name>
    <dbReference type="NCBI Taxonomy" id="882"/>
    <lineage>
        <taxon>Bacteria</taxon>
        <taxon>Pseudomonadati</taxon>
        <taxon>Thermodesulfobacteriota</taxon>
        <taxon>Desulfovibrionia</taxon>
        <taxon>Desulfovibrionales</taxon>
        <taxon>Desulfovibrionaceae</taxon>
        <taxon>Nitratidesulfovibrio</taxon>
    </lineage>
</organism>
<evidence type="ECO:0000255" key="1">
    <source>
        <dbReference type="HAMAP-Rule" id="MF_00012"/>
    </source>
</evidence>
<comment type="function">
    <text evidence="1">Functions in the biosynthesis of branched-chain amino acids. Catalyzes the dehydration of (2R,3R)-2,3-dihydroxy-3-methylpentanoate (2,3-dihydroxy-3-methylvalerate) into 2-oxo-3-methylpentanoate (2-oxo-3-methylvalerate) and of (2R)-2,3-dihydroxy-3-methylbutanoate (2,3-dihydroxyisovalerate) into 2-oxo-3-methylbutanoate (2-oxoisovalerate), the penultimate precursor to L-isoleucine and L-valine, respectively.</text>
</comment>
<comment type="catalytic activity">
    <reaction evidence="1">
        <text>(2R)-2,3-dihydroxy-3-methylbutanoate = 3-methyl-2-oxobutanoate + H2O</text>
        <dbReference type="Rhea" id="RHEA:24809"/>
        <dbReference type="ChEBI" id="CHEBI:11851"/>
        <dbReference type="ChEBI" id="CHEBI:15377"/>
        <dbReference type="ChEBI" id="CHEBI:49072"/>
        <dbReference type="EC" id="4.2.1.9"/>
    </reaction>
    <physiologicalReaction direction="left-to-right" evidence="1">
        <dbReference type="Rhea" id="RHEA:24810"/>
    </physiologicalReaction>
</comment>
<comment type="catalytic activity">
    <reaction evidence="1">
        <text>(2R,3R)-2,3-dihydroxy-3-methylpentanoate = (S)-3-methyl-2-oxopentanoate + H2O</text>
        <dbReference type="Rhea" id="RHEA:27694"/>
        <dbReference type="ChEBI" id="CHEBI:15377"/>
        <dbReference type="ChEBI" id="CHEBI:35146"/>
        <dbReference type="ChEBI" id="CHEBI:49258"/>
        <dbReference type="EC" id="4.2.1.9"/>
    </reaction>
    <physiologicalReaction direction="left-to-right" evidence="1">
        <dbReference type="Rhea" id="RHEA:27695"/>
    </physiologicalReaction>
</comment>
<comment type="cofactor">
    <cofactor evidence="1">
        <name>[2Fe-2S] cluster</name>
        <dbReference type="ChEBI" id="CHEBI:190135"/>
    </cofactor>
    <text evidence="1">Binds 1 [2Fe-2S] cluster per subunit. This cluster acts as a Lewis acid cofactor.</text>
</comment>
<comment type="cofactor">
    <cofactor evidence="1">
        <name>Mg(2+)</name>
        <dbReference type="ChEBI" id="CHEBI:18420"/>
    </cofactor>
</comment>
<comment type="pathway">
    <text evidence="1">Amino-acid biosynthesis; L-isoleucine biosynthesis; L-isoleucine from 2-oxobutanoate: step 3/4.</text>
</comment>
<comment type="pathway">
    <text evidence="1">Amino-acid biosynthesis; L-valine biosynthesis; L-valine from pyruvate: step 3/4.</text>
</comment>
<comment type="subunit">
    <text evidence="1">Homodimer.</text>
</comment>
<comment type="similarity">
    <text evidence="1">Belongs to the IlvD/Edd family.</text>
</comment>